<sequence>MATVLHSESRRLYSWWWDSHIPKNSKWIQQNLSDMDSKVKAMIKLIEEDADSFARRAEMYYKKRPELMKLVEEFYRAYRALAERYDHATVELCHAHKTMAEAFPNQVPFDMIEDSASSSCSEPRTPEKMPPGIQPFYDSDSATSKRGLSQLTEYLGNSETEVESLKRTLVELGAEKEALNLQYQLSLNKFSRLEKDLEVAQKDVSGLDERASKAEIETKILAEALAKLEAERDAALLRYNESMQKITELEESFSHAQEDVKGLTNRATKAETEVENLKQAHSRLHSEKEAGLAEYNRCLEMISNLEKKVRDAEENAQNFSNQSAKAEDEIKALRHELVKVNEVKDGLRLRYQQCLETISKLEREVSHAQDNAKRLSSEVLAGAAKLKTVEDQCTLLESSNETLKLEADGLTHKLAAKDQEIFQKQNELEKFQSLIEDEHSRYLEIEVSLKTLQSLYSQSQEEQKVITSELQSRIGMLRDLETRNLKLEGDISSVKEENQNLSELNDSSMIFLETQKCEISSLKEIKEKLEEEVARHINQSSAFQEEIRRLKDEIDSLNKRYQAIMEQVNLAGLDPKSLACSVRKLQDENSKLTELCNHQSDDKDALTEKLRELDNILRKNVCLEKLLLESNTKLDGSREKTKDLQERCESLRGEKYEFIAERANLLSQLQIMTENMQKLLEKNSLLETSLSGANIELQCVKEKSKCFEEFFQLLKNDKAELIKERESLISQLNAVKEKLGVLEKKFTELEGKYADLQREKQFKNLQVEELRVSLATEKQERASYERSTDTRLADLQNNVSFLREECRSRKKEFEEELDRAVNAQVEIFILQKFIEDLEQKNFSLLIECQKYAEASSFSEKLIAELESENLEQQMEAEFLVHEIDNFRGAICQVFKALQVEADCKTADQKIAKERIPVSRVLGEINELKCSLSSAEYETQRLVIENSVLLSLLGQFQSDGMKLESEKRDVEKDLETIVHHYGMLKKDRLELLEMNRQLKSELIDREQRELELKAELQTEHLKFENLHESYMALHQDYSDALGKNKSLHLKFSELKGEICILEEENGAILEEAIALNNVSVVYQSLGSEKAEQAEAFAKNLNSLQNINSGLKQKVETLEEILKGKEVDSQELNSKLEKLQESLEEANELNDLLEHQILVKEETLRQKAIELLEAEEMLKATHNANAELCEAVEELRKDCKESRKLKGNLEKRNSELCDLAGRQDEEIKILSNLKENLESEVKLLHKEIQEHRVREEFLSSELQEKSNEFGLWDAEATSFYFDLQISAVREVLLENKVQELTGVCENLKDEAVTKTTEINQIKETVGFLEFEVSELKTQLSAYDPVVASLAEDVRSLEQNALSLMKLPVPAGRRREGVQNDEHQEAAVSQEPVGHCSTNLDNGIVLLQDMKTRIKTIKQAVAEEKKRRGKLRRRSSSHRSKDRKLFEEIELEDQFSGEIRQPRSPAMTESKNGSLMKDIPLDQVADTTSYGRSRRTSRGSSDQMLELWEEAAEPESSIKFLINNKNSKKPLIPRLHRRSRNPSVESQSEKMVGVVDKLELSRSTEDNAKILERLLSDSRRLASLRISLRDLKSKLEINEKPGKFTNPDFARVRKQMKEMEEAIFQLANTNEILSNEIEETGDVRDIYRKVVMEKSRIGSEKIEQMQQEMQNIERTVLKLEEGATKSKGRRKFSESRTVILLRDIIHKGGKRTARKKKNRFCGCMRSSGNEE</sequence>
<reference key="1">
    <citation type="journal article" date="2000" name="DNA Res.">
        <title>Structural analysis of Arabidopsis thaliana chromosome 3. I. Sequence features of the regions of 4,504,864 bp covered by sixty P1 and TAC clones.</title>
        <authorList>
            <person name="Sato S."/>
            <person name="Nakamura Y."/>
            <person name="Kaneko T."/>
            <person name="Katoh T."/>
            <person name="Asamizu E."/>
            <person name="Tabata S."/>
        </authorList>
    </citation>
    <scope>NUCLEOTIDE SEQUENCE [LARGE SCALE GENOMIC DNA]</scope>
    <source>
        <strain>cv. Columbia</strain>
    </source>
</reference>
<reference key="2">
    <citation type="journal article" date="2017" name="Plant J.">
        <title>Araport11: a complete reannotation of the Arabidopsis thaliana reference genome.</title>
        <authorList>
            <person name="Cheng C.Y."/>
            <person name="Krishnakumar V."/>
            <person name="Chan A.P."/>
            <person name="Thibaud-Nissen F."/>
            <person name="Schobel S."/>
            <person name="Town C.D."/>
        </authorList>
    </citation>
    <scope>GENOME REANNOTATION</scope>
    <source>
        <strain>cv. Columbia</strain>
    </source>
</reference>
<reference key="3">
    <citation type="journal article" date="2012" name="Curr. Biol.">
        <title>A superfamily of actin-binding proteins at the actin-membrane nexus of higher plants.</title>
        <authorList>
            <person name="Deeks M.J."/>
            <person name="Calcutt J.R."/>
            <person name="Ingle E.K."/>
            <person name="Hawkins T.J."/>
            <person name="Chapman S."/>
            <person name="Richardson A.C."/>
            <person name="Mentlak D.A."/>
            <person name="Dixon M.R."/>
            <person name="Cartwright F."/>
            <person name="Smertenko A.P."/>
            <person name="Oparka K."/>
            <person name="Hussey P.J."/>
        </authorList>
    </citation>
    <scope>FUNCTION</scope>
    <scope>SUBCELLULAR LOCATION</scope>
    <scope>TISSUE SPECIFICITY</scope>
    <scope>DISRUPTION PHENOTYPE</scope>
    <scope>DOMAIN</scope>
    <scope>GENE FAMILY</scope>
    <scope>NOMENCLATURE</scope>
    <scope>INTERACTION WITH F-ACTIN</scope>
</reference>
<reference key="4">
    <citation type="journal article" date="2014" name="Front. Plant Sci.">
        <title>The evolution of the actin binding NET superfamily.</title>
        <authorList>
            <person name="Hawkins T.J."/>
            <person name="Deeks M.J."/>
            <person name="Wang P."/>
            <person name="Hussey P.J."/>
        </authorList>
    </citation>
    <scope>GENE FAMILY</scope>
</reference>
<organism evidence="9">
    <name type="scientific">Arabidopsis thaliana</name>
    <name type="common">Mouse-ear cress</name>
    <dbReference type="NCBI Taxonomy" id="3702"/>
    <lineage>
        <taxon>Eukaryota</taxon>
        <taxon>Viridiplantae</taxon>
        <taxon>Streptophyta</taxon>
        <taxon>Embryophyta</taxon>
        <taxon>Tracheophyta</taxon>
        <taxon>Spermatophyta</taxon>
        <taxon>Magnoliopsida</taxon>
        <taxon>eudicotyledons</taxon>
        <taxon>Gunneridae</taxon>
        <taxon>Pentapetalae</taxon>
        <taxon>rosids</taxon>
        <taxon>malvids</taxon>
        <taxon>Brassicales</taxon>
        <taxon>Brassicaceae</taxon>
        <taxon>Camelineae</taxon>
        <taxon>Arabidopsis</taxon>
    </lineage>
</organism>
<keyword id="KW-0965">Cell junction</keyword>
<keyword id="KW-1003">Cell membrane</keyword>
<keyword id="KW-0175">Coiled coil</keyword>
<keyword id="KW-0963">Cytoplasm</keyword>
<keyword id="KW-0206">Cytoskeleton</keyword>
<keyword id="KW-0472">Membrane</keyword>
<keyword id="KW-1185">Reference proteome</keyword>
<feature type="chain" id="PRO_0000431849" description="Protein NETWORKED 1A">
    <location>
        <begin position="1"/>
        <end position="1728"/>
    </location>
</feature>
<feature type="domain" description="NAB" evidence="2">
    <location>
        <begin position="13"/>
        <end position="92"/>
    </location>
</feature>
<feature type="region of interest" description="Disordered" evidence="3">
    <location>
        <begin position="1419"/>
        <end position="1441"/>
    </location>
</feature>
<feature type="coiled-coil region" evidence="1">
    <location>
        <begin position="155"/>
        <end position="446"/>
    </location>
</feature>
<feature type="coiled-coil region" evidence="1">
    <location>
        <begin position="476"/>
        <end position="827"/>
    </location>
</feature>
<feature type="coiled-coil region" evidence="1">
    <location>
        <begin position="857"/>
        <end position="885"/>
    </location>
</feature>
<feature type="coiled-coil region" evidence="1">
    <location>
        <begin position="954"/>
        <end position="1016"/>
    </location>
</feature>
<feature type="coiled-coil region" evidence="1">
    <location>
        <begin position="1090"/>
        <end position="1323"/>
    </location>
</feature>
<feature type="coiled-coil region" evidence="1">
    <location>
        <begin position="1403"/>
        <end position="1431"/>
    </location>
</feature>
<feature type="coiled-coil region" evidence="1">
    <location>
        <begin position="1576"/>
        <end position="1684"/>
    </location>
</feature>
<feature type="compositionally biased region" description="Basic residues" evidence="3">
    <location>
        <begin position="1424"/>
        <end position="1439"/>
    </location>
</feature>
<comment type="function">
    <text evidence="4">Plant-specific actin binding protein. Associates with F-actin at the plasma membrane and plasmodesmata. May be part of a membrane-cytoskeletal adapter complex.</text>
</comment>
<comment type="subunit">
    <text evidence="4">Interacts with F-actin.</text>
</comment>
<comment type="subcellular location">
    <subcellularLocation>
        <location evidence="4">Cytoplasm</location>
        <location evidence="4">Cytoskeleton</location>
    </subcellularLocation>
    <subcellularLocation>
        <location evidence="4">Cell membrane</location>
    </subcellularLocation>
    <subcellularLocation>
        <location evidence="4">Cell junction</location>
        <location evidence="4">Plasmodesma</location>
    </subcellularLocation>
    <text evidence="4">Localizes to the cell cortex and shows polar enrichment at the apical and basal cell boundaries.</text>
</comment>
<comment type="tissue specificity">
    <text evidence="4">Expressed in root meristems and at very low levels throughout mature vasculature.</text>
</comment>
<comment type="domain">
    <text evidence="4">The NAB domain, also called NAB (NET actin-binding) domain, is sufficient for F-actin binding.</text>
</comment>
<comment type="disruption phenotype">
    <text evidence="4">No visible phenotype, due to the redundancy with NET1B. Net1a and net1b double mutant shows a significant acceleration in root-cell expansion.</text>
</comment>
<comment type="similarity">
    <text evidence="6">Belongs to the NET family.</text>
</comment>
<accession>Q9LUI2</accession>
<accession>A0A1I9LP68</accession>
<proteinExistence type="evidence at protein level"/>
<gene>
    <name evidence="5" type="primary">NET1A</name>
    <name evidence="7" type="ordered locus">At3g22790</name>
    <name evidence="8" type="ORF">MWI23.16</name>
</gene>
<dbReference type="EMBL" id="AB022223">
    <property type="protein sequence ID" value="BAB01254.1"/>
    <property type="molecule type" value="Genomic_DNA"/>
</dbReference>
<dbReference type="EMBL" id="CP002686">
    <property type="protein sequence ID" value="AEE76677.1"/>
    <property type="molecule type" value="Genomic_DNA"/>
</dbReference>
<dbReference type="EMBL" id="CP002686">
    <property type="protein sequence ID" value="ANM64376.1"/>
    <property type="molecule type" value="Genomic_DNA"/>
</dbReference>
<dbReference type="EMBL" id="CP002686">
    <property type="protein sequence ID" value="ANM64377.1"/>
    <property type="molecule type" value="Genomic_DNA"/>
</dbReference>
<dbReference type="RefSeq" id="NP_001319620.1">
    <property type="nucleotide sequence ID" value="NM_001338597.1"/>
</dbReference>
<dbReference type="RefSeq" id="NP_001326409.1">
    <property type="nucleotide sequence ID" value="NM_001338598.1"/>
</dbReference>
<dbReference type="RefSeq" id="NP_188918.2">
    <property type="nucleotide sequence ID" value="NM_113178.3"/>
</dbReference>
<dbReference type="SMR" id="Q9LUI2"/>
<dbReference type="FunCoup" id="Q9LUI2">
    <property type="interactions" value="764"/>
</dbReference>
<dbReference type="STRING" id="3702.Q9LUI2"/>
<dbReference type="iPTMnet" id="Q9LUI2"/>
<dbReference type="PaxDb" id="3702-AT3G22790.1"/>
<dbReference type="ProteomicsDB" id="250556"/>
<dbReference type="EnsemblPlants" id="AT3G22790.1">
    <property type="protein sequence ID" value="AT3G22790.1"/>
    <property type="gene ID" value="AT3G22790"/>
</dbReference>
<dbReference type="EnsemblPlants" id="AT3G22790.2">
    <property type="protein sequence ID" value="AT3G22790.2"/>
    <property type="gene ID" value="AT3G22790"/>
</dbReference>
<dbReference type="EnsemblPlants" id="AT3G22790.3">
    <property type="protein sequence ID" value="AT3G22790.3"/>
    <property type="gene ID" value="AT3G22790"/>
</dbReference>
<dbReference type="GeneID" id="821850"/>
<dbReference type="Gramene" id="AT3G22790.1">
    <property type="protein sequence ID" value="AT3G22790.1"/>
    <property type="gene ID" value="AT3G22790"/>
</dbReference>
<dbReference type="Gramene" id="AT3G22790.2">
    <property type="protein sequence ID" value="AT3G22790.2"/>
    <property type="gene ID" value="AT3G22790"/>
</dbReference>
<dbReference type="Gramene" id="AT3G22790.3">
    <property type="protein sequence ID" value="AT3G22790.3"/>
    <property type="gene ID" value="AT3G22790"/>
</dbReference>
<dbReference type="KEGG" id="ath:AT3G22790"/>
<dbReference type="Araport" id="AT3G22790"/>
<dbReference type="TAIR" id="AT3G22790">
    <property type="gene designation" value="NET1A"/>
</dbReference>
<dbReference type="eggNOG" id="ENOG502QQ6M">
    <property type="taxonomic scope" value="Eukaryota"/>
</dbReference>
<dbReference type="HOGENOM" id="CLU_001229_1_1_1"/>
<dbReference type="InParanoid" id="Q9LUI2"/>
<dbReference type="OMA" id="AKHTEDI"/>
<dbReference type="PhylomeDB" id="Q9LUI2"/>
<dbReference type="PRO" id="PR:Q9LUI2"/>
<dbReference type="Proteomes" id="UP000006548">
    <property type="component" value="Chromosome 3"/>
</dbReference>
<dbReference type="ExpressionAtlas" id="Q9LUI2">
    <property type="expression patterns" value="baseline and differential"/>
</dbReference>
<dbReference type="GO" id="GO:0005737">
    <property type="term" value="C:cytoplasm"/>
    <property type="evidence" value="ECO:0007669"/>
    <property type="project" value="UniProtKB-KW"/>
</dbReference>
<dbReference type="GO" id="GO:0005856">
    <property type="term" value="C:cytoskeleton"/>
    <property type="evidence" value="ECO:0007669"/>
    <property type="project" value="UniProtKB-SubCell"/>
</dbReference>
<dbReference type="GO" id="GO:0005886">
    <property type="term" value="C:plasma membrane"/>
    <property type="evidence" value="ECO:0000314"/>
    <property type="project" value="TAIR"/>
</dbReference>
<dbReference type="GO" id="GO:0009506">
    <property type="term" value="C:plasmodesma"/>
    <property type="evidence" value="ECO:0000314"/>
    <property type="project" value="TAIR"/>
</dbReference>
<dbReference type="GO" id="GO:0051015">
    <property type="term" value="F:actin filament binding"/>
    <property type="evidence" value="ECO:0000314"/>
    <property type="project" value="TAIR"/>
</dbReference>
<dbReference type="Gene3D" id="1.10.287.1490">
    <property type="match status" value="1"/>
</dbReference>
<dbReference type="InterPro" id="IPR011684">
    <property type="entry name" value="NAB"/>
</dbReference>
<dbReference type="InterPro" id="IPR051861">
    <property type="entry name" value="NET_actin-binding_domain"/>
</dbReference>
<dbReference type="PANTHER" id="PTHR32258:SF6">
    <property type="entry name" value="PROTEIN NETWORKED 1A"/>
    <property type="match status" value="1"/>
</dbReference>
<dbReference type="PANTHER" id="PTHR32258">
    <property type="entry name" value="PROTEIN NETWORKED 4A"/>
    <property type="match status" value="1"/>
</dbReference>
<dbReference type="Pfam" id="PF07765">
    <property type="entry name" value="KIP1"/>
    <property type="match status" value="1"/>
</dbReference>
<dbReference type="PROSITE" id="PS51774">
    <property type="entry name" value="NAB"/>
    <property type="match status" value="1"/>
</dbReference>
<evidence type="ECO:0000255" key="1"/>
<evidence type="ECO:0000255" key="2">
    <source>
        <dbReference type="PROSITE-ProRule" id="PRU01110"/>
    </source>
</evidence>
<evidence type="ECO:0000256" key="3">
    <source>
        <dbReference type="SAM" id="MobiDB-lite"/>
    </source>
</evidence>
<evidence type="ECO:0000269" key="4">
    <source>
    </source>
</evidence>
<evidence type="ECO:0000303" key="5">
    <source>
    </source>
</evidence>
<evidence type="ECO:0000305" key="6"/>
<evidence type="ECO:0000312" key="7">
    <source>
        <dbReference type="Araport" id="AT3G22790"/>
    </source>
</evidence>
<evidence type="ECO:0000312" key="8">
    <source>
        <dbReference type="EMBL" id="BAB01254.1"/>
    </source>
</evidence>
<evidence type="ECO:0000312" key="9">
    <source>
        <dbReference type="Proteomes" id="UP000006548"/>
    </source>
</evidence>
<name>NET1A_ARATH</name>
<protein>
    <recommendedName>
        <fullName evidence="5">Protein NETWORKED 1A</fullName>
    </recommendedName>
</protein>